<evidence type="ECO:0000250" key="1"/>
<evidence type="ECO:0000305" key="2"/>
<keyword id="KW-0010">Activator</keyword>
<keyword id="KW-0539">Nucleus</keyword>
<keyword id="KW-1185">Reference proteome</keyword>
<keyword id="KW-0804">Transcription</keyword>
<keyword id="KW-0805">Transcription regulation</keyword>
<proteinExistence type="evidence at transcript level"/>
<sequence length="311" mass="35523">MADTLNVGVNLEAFSQAIHCIQALRSSVTRVFDCLKDGMKNKESQEVRERAFVSEFQDNLHCVNRDLNELERLSNLVGKPSENHPLHNSGLLSLDPVHDKTPLYSQLLQAYKWSNKLQFHAGLASGLLNQQSLKRSANQMGVSAKRRPKVQPTTLALPPQYIDDVISRIDRMFPEMTIQLSRPNGSSAMLLVTLGKVLKVVVVMRSLFIDRTIVKGYNENVYTEDGKLDIWSKSNYQVFQKVTDHATTALLHYQLPQMPDVVVRSFMTWLRSYIKLFQAPCQRCGKFLQDGLPPTWRDFRTLEAFHDSCRQ</sequence>
<gene>
    <name type="primary">med27-a</name>
    <name type="synonym">crsp8-a</name>
</gene>
<reference key="1">
    <citation type="submission" date="2004-08" db="EMBL/GenBank/DDBJ databases">
        <authorList>
            <consortium name="NIH - Xenopus Gene Collection (XGC) project"/>
        </authorList>
    </citation>
    <scope>NUCLEOTIDE SEQUENCE [LARGE SCALE MRNA]</scope>
    <source>
        <tissue>Oocyte</tissue>
    </source>
</reference>
<dbReference type="EMBL" id="BC081194">
    <property type="protein sequence ID" value="AAH81194.1"/>
    <property type="molecule type" value="mRNA"/>
</dbReference>
<dbReference type="RefSeq" id="NP_001087771.1">
    <property type="nucleotide sequence ID" value="NM_001094302.1"/>
</dbReference>
<dbReference type="SMR" id="Q642Q3"/>
<dbReference type="DNASU" id="447595"/>
<dbReference type="GeneID" id="447595"/>
<dbReference type="KEGG" id="xla:447595"/>
<dbReference type="AGR" id="Xenbase:XB-GENE-6054390"/>
<dbReference type="CTD" id="447595"/>
<dbReference type="Xenbase" id="XB-GENE-6054390">
    <property type="gene designation" value="med27.L"/>
</dbReference>
<dbReference type="OrthoDB" id="1868004at2759"/>
<dbReference type="Proteomes" id="UP000186698">
    <property type="component" value="Chromosome 8L"/>
</dbReference>
<dbReference type="Bgee" id="447595">
    <property type="expression patterns" value="Expressed in gastrula and 19 other cell types or tissues"/>
</dbReference>
<dbReference type="GO" id="GO:0016592">
    <property type="term" value="C:mediator complex"/>
    <property type="evidence" value="ECO:0000318"/>
    <property type="project" value="GO_Central"/>
</dbReference>
<dbReference type="GO" id="GO:0003713">
    <property type="term" value="F:transcription coactivator activity"/>
    <property type="evidence" value="ECO:0000318"/>
    <property type="project" value="GO_Central"/>
</dbReference>
<dbReference type="GO" id="GO:0006357">
    <property type="term" value="P:regulation of transcription by RNA polymerase II"/>
    <property type="evidence" value="ECO:0000318"/>
    <property type="project" value="GO_Central"/>
</dbReference>
<dbReference type="InterPro" id="IPR021627">
    <property type="entry name" value="Mediator_Med27"/>
</dbReference>
<dbReference type="PANTHER" id="PTHR13130">
    <property type="entry name" value="34 KDA TRANSCRIPTIONAL CO-ACTIVATOR-RELATED"/>
    <property type="match status" value="1"/>
</dbReference>
<dbReference type="PANTHER" id="PTHR13130:SF4">
    <property type="entry name" value="MEDIATOR OF RNA POLYMERASE II TRANSCRIPTION SUBUNIT 27"/>
    <property type="match status" value="1"/>
</dbReference>
<dbReference type="Pfam" id="PF11571">
    <property type="entry name" value="Med27"/>
    <property type="match status" value="1"/>
</dbReference>
<feature type="chain" id="PRO_0000305013" description="Mediator of RNA polymerase II transcription subunit 27-A">
    <location>
        <begin position="1"/>
        <end position="311"/>
    </location>
</feature>
<accession>Q642Q3</accession>
<comment type="function">
    <text evidence="1">Component of the Mediator complex, a coactivator involved in the regulated transcription of nearly all RNA polymerase II-dependent genes. Mediator functions as a bridge to convey information from gene-specific regulatory proteins to the basal RNA polymerase II transcription machinery. Mediator is recruited to promoters by direct interactions with regulatory proteins and serves as a scaffold for the assembly of a functional preinitiation complex with RNA polymerase II and the general transcription factors (By similarity).</text>
</comment>
<comment type="subunit">
    <text evidence="1">Component of the Mediator complex.</text>
</comment>
<comment type="subcellular location">
    <subcellularLocation>
        <location evidence="1">Nucleus</location>
    </subcellularLocation>
</comment>
<comment type="similarity">
    <text evidence="2">Belongs to the Mediator complex subunit 27 family.</text>
</comment>
<name>MD27A_XENLA</name>
<organism>
    <name type="scientific">Xenopus laevis</name>
    <name type="common">African clawed frog</name>
    <dbReference type="NCBI Taxonomy" id="8355"/>
    <lineage>
        <taxon>Eukaryota</taxon>
        <taxon>Metazoa</taxon>
        <taxon>Chordata</taxon>
        <taxon>Craniata</taxon>
        <taxon>Vertebrata</taxon>
        <taxon>Euteleostomi</taxon>
        <taxon>Amphibia</taxon>
        <taxon>Batrachia</taxon>
        <taxon>Anura</taxon>
        <taxon>Pipoidea</taxon>
        <taxon>Pipidae</taxon>
        <taxon>Xenopodinae</taxon>
        <taxon>Xenopus</taxon>
        <taxon>Xenopus</taxon>
    </lineage>
</organism>
<protein>
    <recommendedName>
        <fullName>Mediator of RNA polymerase II transcription subunit 27-A</fullName>
    </recommendedName>
    <alternativeName>
        <fullName>Cofactor required for Sp1 transcriptional activation subunit 8-A</fullName>
        <shortName>CRSP complex subunit 8-A</shortName>
    </alternativeName>
    <alternativeName>
        <fullName>Mediator complex subunit 27-A</fullName>
    </alternativeName>
</protein>